<organism>
    <name type="scientific">Salmonella schwarzengrund (strain CVM19633)</name>
    <dbReference type="NCBI Taxonomy" id="439843"/>
    <lineage>
        <taxon>Bacteria</taxon>
        <taxon>Pseudomonadati</taxon>
        <taxon>Pseudomonadota</taxon>
        <taxon>Gammaproteobacteria</taxon>
        <taxon>Enterobacterales</taxon>
        <taxon>Enterobacteriaceae</taxon>
        <taxon>Salmonella</taxon>
    </lineage>
</organism>
<accession>B4TVY2</accession>
<name>GARL_SALSV</name>
<protein>
    <recommendedName>
        <fullName evidence="1">5-keto-4-deoxy-D-glucarate aldolase</fullName>
        <shortName evidence="1">KDGluc aldolase</shortName>
        <shortName evidence="1">KDGlucA</shortName>
        <ecNumber evidence="1">4.1.2.20</ecNumber>
    </recommendedName>
    <alternativeName>
        <fullName evidence="1">2-dehydro-3-deoxy-D-glucarate aldolase</fullName>
    </alternativeName>
    <alternativeName>
        <fullName evidence="1">2-keto-3-deoxy-D-glucarate aldolase</fullName>
    </alternativeName>
    <alternativeName>
        <fullName evidence="1">5-dehydro-4-deoxy-D-glucarate aldolase</fullName>
    </alternativeName>
    <alternativeName>
        <fullName evidence="1">Alpha-keto-beta-deoxy-D-glucarate aldolase</fullName>
    </alternativeName>
</protein>
<gene>
    <name evidence="1" type="primary">garL</name>
    <name type="ordered locus">SeSA_A3442</name>
</gene>
<feature type="chain" id="PRO_1000140417" description="5-keto-4-deoxy-D-glucarate aldolase">
    <location>
        <begin position="1"/>
        <end position="256"/>
    </location>
</feature>
<feature type="active site" description="Proton acceptor" evidence="1">
    <location>
        <position position="50"/>
    </location>
</feature>
<feature type="binding site" evidence="1">
    <location>
        <position position="151"/>
    </location>
    <ligand>
        <name>substrate</name>
    </ligand>
</feature>
<feature type="binding site" evidence="1">
    <location>
        <position position="153"/>
    </location>
    <ligand>
        <name>Mg(2+)</name>
        <dbReference type="ChEBI" id="CHEBI:18420"/>
    </ligand>
</feature>
<feature type="binding site" evidence="1">
    <location>
        <position position="178"/>
    </location>
    <ligand>
        <name>substrate</name>
    </ligand>
</feature>
<feature type="binding site" evidence="1">
    <location>
        <position position="179"/>
    </location>
    <ligand>
        <name>Mg(2+)</name>
        <dbReference type="ChEBI" id="CHEBI:18420"/>
    </ligand>
</feature>
<feature type="binding site" evidence="1">
    <location>
        <position position="179"/>
    </location>
    <ligand>
        <name>substrate</name>
    </ligand>
</feature>
<feature type="site" description="Transition state stabilizer" evidence="1">
    <location>
        <position position="75"/>
    </location>
</feature>
<feature type="site" description="Increases basicity of active site His" evidence="1">
    <location>
        <position position="89"/>
    </location>
</feature>
<proteinExistence type="inferred from homology"/>
<reference key="1">
    <citation type="journal article" date="2011" name="J. Bacteriol.">
        <title>Comparative genomics of 28 Salmonella enterica isolates: evidence for CRISPR-mediated adaptive sublineage evolution.</title>
        <authorList>
            <person name="Fricke W.F."/>
            <person name="Mammel M.K."/>
            <person name="McDermott P.F."/>
            <person name="Tartera C."/>
            <person name="White D.G."/>
            <person name="Leclerc J.E."/>
            <person name="Ravel J."/>
            <person name="Cebula T.A."/>
        </authorList>
    </citation>
    <scope>NUCLEOTIDE SEQUENCE [LARGE SCALE GENOMIC DNA]</scope>
    <source>
        <strain>CVM19633</strain>
    </source>
</reference>
<evidence type="ECO:0000255" key="1">
    <source>
        <dbReference type="HAMAP-Rule" id="MF_01291"/>
    </source>
</evidence>
<sequence length="256" mass="27321">MNNAIFPNKFKAALAAQQVQIGCWSALASPITTEVLGLAGFDWLVLDGEHAPNDVTTLIPQLMALKGSASAPVVRVPTNEPVIIKRMLDIGFYNFLIPFVETQEEAARAVASTRYPPEGIRGVSVSHRANMFGTVPDYFAQSNKNITIIVQIESQLGVDNVDAIAATEGVDGIFVGPSDLAAALGHLGNASHPDVQQTIQHIFARAKAHGKPCGILAPVEADARRYLEWGATFVAVGSDLGAFRASTQKLADTFKK</sequence>
<keyword id="KW-0456">Lyase</keyword>
<keyword id="KW-0460">Magnesium</keyword>
<keyword id="KW-0479">Metal-binding</keyword>
<dbReference type="EC" id="4.1.2.20" evidence="1"/>
<dbReference type="EMBL" id="CP001127">
    <property type="protein sequence ID" value="ACF88867.1"/>
    <property type="molecule type" value="Genomic_DNA"/>
</dbReference>
<dbReference type="RefSeq" id="WP_001057715.1">
    <property type="nucleotide sequence ID" value="NC_011094.1"/>
</dbReference>
<dbReference type="SMR" id="B4TVY2"/>
<dbReference type="KEGG" id="sew:SeSA_A3442"/>
<dbReference type="HOGENOM" id="CLU_059964_1_0_6"/>
<dbReference type="UniPathway" id="UPA00565">
    <property type="reaction ID" value="UER00630"/>
</dbReference>
<dbReference type="Proteomes" id="UP000001865">
    <property type="component" value="Chromosome"/>
</dbReference>
<dbReference type="GO" id="GO:0005737">
    <property type="term" value="C:cytoplasm"/>
    <property type="evidence" value="ECO:0007669"/>
    <property type="project" value="TreeGrafter"/>
</dbReference>
<dbReference type="GO" id="GO:0008672">
    <property type="term" value="F:2-dehydro-3-deoxyglucarate aldolase activity"/>
    <property type="evidence" value="ECO:0007669"/>
    <property type="project" value="UniProtKB-UniRule"/>
</dbReference>
<dbReference type="GO" id="GO:0000287">
    <property type="term" value="F:magnesium ion binding"/>
    <property type="evidence" value="ECO:0007669"/>
    <property type="project" value="UniProtKB-UniRule"/>
</dbReference>
<dbReference type="GO" id="GO:0042838">
    <property type="term" value="P:D-glucarate catabolic process"/>
    <property type="evidence" value="ECO:0007669"/>
    <property type="project" value="UniProtKB-UniRule"/>
</dbReference>
<dbReference type="GO" id="GO:0046392">
    <property type="term" value="P:galactarate catabolic process"/>
    <property type="evidence" value="ECO:0007669"/>
    <property type="project" value="UniProtKB-UniRule"/>
</dbReference>
<dbReference type="FunFam" id="3.20.20.60:FF:000004">
    <property type="entry name" value="5-keto-4-deoxy-D-glucarate aldolase"/>
    <property type="match status" value="1"/>
</dbReference>
<dbReference type="Gene3D" id="3.20.20.60">
    <property type="entry name" value="Phosphoenolpyruvate-binding domains"/>
    <property type="match status" value="1"/>
</dbReference>
<dbReference type="HAMAP" id="MF_01291">
    <property type="entry name" value="KDGluc_aldolase"/>
    <property type="match status" value="1"/>
</dbReference>
<dbReference type="InterPro" id="IPR005000">
    <property type="entry name" value="Aldolase/citrate-lyase_domain"/>
</dbReference>
<dbReference type="InterPro" id="IPR017648">
    <property type="entry name" value="GarL"/>
</dbReference>
<dbReference type="InterPro" id="IPR050251">
    <property type="entry name" value="HpcH-HpaI_aldolase"/>
</dbReference>
<dbReference type="InterPro" id="IPR015813">
    <property type="entry name" value="Pyrv/PenolPyrv_kinase-like_dom"/>
</dbReference>
<dbReference type="InterPro" id="IPR040442">
    <property type="entry name" value="Pyrv_kinase-like_dom_sf"/>
</dbReference>
<dbReference type="NCBIfam" id="TIGR03239">
    <property type="entry name" value="GarL"/>
    <property type="match status" value="1"/>
</dbReference>
<dbReference type="NCBIfam" id="NF007849">
    <property type="entry name" value="PRK10558.1"/>
    <property type="match status" value="1"/>
</dbReference>
<dbReference type="PANTHER" id="PTHR30502">
    <property type="entry name" value="2-KETO-3-DEOXY-L-RHAMNONATE ALDOLASE"/>
    <property type="match status" value="1"/>
</dbReference>
<dbReference type="PANTHER" id="PTHR30502:SF4">
    <property type="entry name" value="5-KETO-4-DEOXY-D-GLUCARATE ALDOLASE"/>
    <property type="match status" value="1"/>
</dbReference>
<dbReference type="Pfam" id="PF03328">
    <property type="entry name" value="HpcH_HpaI"/>
    <property type="match status" value="1"/>
</dbReference>
<dbReference type="SUPFAM" id="SSF51621">
    <property type="entry name" value="Phosphoenolpyruvate/pyruvate domain"/>
    <property type="match status" value="1"/>
</dbReference>
<comment type="function">
    <text evidence="1">Catalyzes the reversible retro-aldol cleavage of both 5-keto-4-deoxy-D-glucarate and 2-keto-3-deoxy-D-glucarate to pyruvate and tartronic semialdehyde.</text>
</comment>
<comment type="catalytic activity">
    <reaction evidence="1">
        <text>5-dehydro-4-deoxy-D-glucarate = 2-hydroxy-3-oxopropanoate + pyruvate</text>
        <dbReference type="Rhea" id="RHEA:27726"/>
        <dbReference type="ChEBI" id="CHEBI:15361"/>
        <dbReference type="ChEBI" id="CHEBI:42819"/>
        <dbReference type="ChEBI" id="CHEBI:57978"/>
    </reaction>
</comment>
<comment type="catalytic activity">
    <reaction evidence="1">
        <text>2-dehydro-3-deoxy-D-glucarate = 2-hydroxy-3-oxopropanoate + pyruvate</text>
        <dbReference type="Rhea" id="RHEA:10268"/>
        <dbReference type="ChEBI" id="CHEBI:15361"/>
        <dbReference type="ChEBI" id="CHEBI:57978"/>
        <dbReference type="ChEBI" id="CHEBI:58098"/>
        <dbReference type="EC" id="4.1.2.20"/>
    </reaction>
</comment>
<comment type="cofactor">
    <cofactor evidence="1">
        <name>Mg(2+)</name>
        <dbReference type="ChEBI" id="CHEBI:18420"/>
    </cofactor>
    <text evidence="1">Binds 1 Mg(2+) ion per subunit.</text>
</comment>
<comment type="pathway">
    <text evidence="1">Carbohydrate acid metabolism; galactarate degradation; D-glycerate from galactarate: step 2/3.</text>
</comment>
<comment type="subunit">
    <text evidence="1">Homohexamer; trimer of dimers.</text>
</comment>
<comment type="similarity">
    <text evidence="1">Belongs to the HpcH/HpaI aldolase family. KDGluc aldolase subfamily.</text>
</comment>